<reference key="1">
    <citation type="submission" date="2006-01" db="EMBL/GenBank/DDBJ databases">
        <title>A comparison of the first two published chloroplast genomes in Asteraceae: Lactuca and Helianthus.</title>
        <authorList>
            <person name="Timme R.E."/>
            <person name="Kuehl J.V."/>
            <person name="Boore J.L."/>
            <person name="Jansen R.K."/>
        </authorList>
    </citation>
    <scope>NUCLEOTIDE SEQUENCE [LARGE SCALE GENOMIC DNA]</scope>
    <source>
        <strain>cv. HA383</strain>
    </source>
</reference>
<accession>Q1KXX2</accession>
<proteinExistence type="inferred from homology"/>
<organism>
    <name type="scientific">Helianthus annuus</name>
    <name type="common">Common sunflower</name>
    <dbReference type="NCBI Taxonomy" id="4232"/>
    <lineage>
        <taxon>Eukaryota</taxon>
        <taxon>Viridiplantae</taxon>
        <taxon>Streptophyta</taxon>
        <taxon>Embryophyta</taxon>
        <taxon>Tracheophyta</taxon>
        <taxon>Spermatophyta</taxon>
        <taxon>Magnoliopsida</taxon>
        <taxon>eudicotyledons</taxon>
        <taxon>Gunneridae</taxon>
        <taxon>Pentapetalae</taxon>
        <taxon>asterids</taxon>
        <taxon>campanulids</taxon>
        <taxon>Asterales</taxon>
        <taxon>Asteraceae</taxon>
        <taxon>Asteroideae</taxon>
        <taxon>Heliantheae alliance</taxon>
        <taxon>Heliantheae</taxon>
        <taxon>Helianthus</taxon>
    </lineage>
</organism>
<keyword id="KW-0150">Chloroplast</keyword>
<keyword id="KW-0240">DNA-directed RNA polymerase</keyword>
<keyword id="KW-0548">Nucleotidyltransferase</keyword>
<keyword id="KW-0934">Plastid</keyword>
<keyword id="KW-0804">Transcription</keyword>
<keyword id="KW-0808">Transferase</keyword>
<feature type="chain" id="PRO_0000276589" description="DNA-directed RNA polymerase subunit beta">
    <location>
        <begin position="1"/>
        <end position="1060"/>
    </location>
</feature>
<protein>
    <recommendedName>
        <fullName evidence="1">DNA-directed RNA polymerase subunit beta</fullName>
        <ecNumber evidence="1">2.7.7.6</ecNumber>
    </recommendedName>
    <alternativeName>
        <fullName evidence="1">PEP</fullName>
    </alternativeName>
    <alternativeName>
        <fullName evidence="1">Plastid-encoded RNA polymerase subunit beta</fullName>
        <shortName evidence="1">RNA polymerase subunit beta</shortName>
    </alternativeName>
</protein>
<sequence length="1060" mass="120595">MSTIPGFNQIQFEGFCRFIDQGLAEELSKFPKIEDTNQEIDFEFFLERYQLVEPLIKERDAVYESLTYSSELYVSARLIWKNDRRRYIQEQTILIGKIPIMTSLGAFIVNGIYRIVINQILQSPGIYYQSELNDNGISVYTGTIISDWGGRLELEIDRKARIWVRVSRQQKLSILVLLSAMGLNIREILENVCYPELFLSFLNDKKKIGSKENAILEFYQQFACVEGDPVFSESLSKDLQKKFFQQRCELGGIGRRNMNRRLNLDIPQNNTFLLPRDILAAADRLIRIKFGMGTLDDMNHLQNKRIRSVADLLQEQFGLALVRLENMARGNIYAALKHNWTPTPQNLVNSTPLTDTYKVFFRLHPLSQVLDRTNPLTQIVHGRKLSYLGPGGLTARTATFPIRDIHPSHYGRICPIDTSEGINVGLIGSLAIHARIGRWGSLESPFYQISERSKGAQMLYLSPGRDEYYMVAAGNSLALNQGIQEEQVVPARYRQEFLTIAWEQVQLRSIFAFQYFSIGASLIPFIEHNDANRALMSSNMQRQAVPLSQSEKCIVGTGLEGQAALDSGALAIAEHEGKIFYTDTDKILLSGNGDTLRIPLVMYQRSNKNTCMHQKPQVRRGKCIKKGQILAYGAATVGGELALGKNVLVAYMPWEGYNFEDAVLISERLVYEDIYTSFHIRKYEIQINQGPERVTNEIPHLEVHLLRNLDKNGIVMLGSWVETGDILVGKLTPQMVKESSYAPEDRLLRTILGMRVYTSKETCLKLPIGGRGRVIDVRWVQSSKTDETEKTESIRVYILQKREIKVGDKVAGRHGNKGIISKILPRQDMPYLQDGRPVDMVFNPLGVPSRMNVGQIFESSLGLAGDLLDRHYRIAPFDERYEQEASRKLVFSELYEASKQTANPWIFEPESPGKSRIFDGRTGDPFEQPVIIGKPYILKLIHQVDDKIHGRSSGRYSRLTQQPLKGRAKKGGQRVGEMEVWALEGFGVAYILQEMLTYKSDHIRARQEVLGTIIFGGRIPTPEDAPESFRLFVRELRSLALELNHFLVSEKTFQLNRKEA</sequence>
<comment type="function">
    <text evidence="1">DNA-dependent RNA polymerase catalyzes the transcription of DNA into RNA using the four ribonucleoside triphosphates as substrates.</text>
</comment>
<comment type="catalytic activity">
    <reaction evidence="1">
        <text>RNA(n) + a ribonucleoside 5'-triphosphate = RNA(n+1) + diphosphate</text>
        <dbReference type="Rhea" id="RHEA:21248"/>
        <dbReference type="Rhea" id="RHEA-COMP:14527"/>
        <dbReference type="Rhea" id="RHEA-COMP:17342"/>
        <dbReference type="ChEBI" id="CHEBI:33019"/>
        <dbReference type="ChEBI" id="CHEBI:61557"/>
        <dbReference type="ChEBI" id="CHEBI:140395"/>
        <dbReference type="EC" id="2.7.7.6"/>
    </reaction>
</comment>
<comment type="subunit">
    <text evidence="1">In plastids the minimal PEP RNA polymerase catalytic core is composed of four subunits: alpha, beta, beta', and beta''. When a (nuclear-encoded) sigma factor is associated with the core the holoenzyme is formed, which can initiate transcription.</text>
</comment>
<comment type="subcellular location">
    <subcellularLocation>
        <location>Plastid</location>
        <location>Chloroplast</location>
    </subcellularLocation>
</comment>
<comment type="similarity">
    <text evidence="1">Belongs to the RNA polymerase beta chain family.</text>
</comment>
<dbReference type="EC" id="2.7.7.6" evidence="1"/>
<dbReference type="EMBL" id="DQ383815">
    <property type="protein sequence ID" value="ABD47133.1"/>
    <property type="molecule type" value="Genomic_DNA"/>
</dbReference>
<dbReference type="RefSeq" id="YP_588104.1">
    <property type="nucleotide sequence ID" value="NC_007977.1"/>
</dbReference>
<dbReference type="SMR" id="Q1KXX2"/>
<dbReference type="GeneID" id="4055679"/>
<dbReference type="KEGG" id="han:4055679"/>
<dbReference type="OrthoDB" id="1927092at2759"/>
<dbReference type="PhylomeDB" id="Q1KXX2"/>
<dbReference type="GO" id="GO:0009507">
    <property type="term" value="C:chloroplast"/>
    <property type="evidence" value="ECO:0007669"/>
    <property type="project" value="UniProtKB-SubCell"/>
</dbReference>
<dbReference type="GO" id="GO:0000428">
    <property type="term" value="C:DNA-directed RNA polymerase complex"/>
    <property type="evidence" value="ECO:0007669"/>
    <property type="project" value="UniProtKB-KW"/>
</dbReference>
<dbReference type="GO" id="GO:0005739">
    <property type="term" value="C:mitochondrion"/>
    <property type="evidence" value="ECO:0007669"/>
    <property type="project" value="GOC"/>
</dbReference>
<dbReference type="GO" id="GO:0003677">
    <property type="term" value="F:DNA binding"/>
    <property type="evidence" value="ECO:0007669"/>
    <property type="project" value="UniProtKB-UniRule"/>
</dbReference>
<dbReference type="GO" id="GO:0003899">
    <property type="term" value="F:DNA-directed RNA polymerase activity"/>
    <property type="evidence" value="ECO:0007669"/>
    <property type="project" value="UniProtKB-UniRule"/>
</dbReference>
<dbReference type="GO" id="GO:0032549">
    <property type="term" value="F:ribonucleoside binding"/>
    <property type="evidence" value="ECO:0007669"/>
    <property type="project" value="InterPro"/>
</dbReference>
<dbReference type="GO" id="GO:0006351">
    <property type="term" value="P:DNA-templated transcription"/>
    <property type="evidence" value="ECO:0007669"/>
    <property type="project" value="UniProtKB-UniRule"/>
</dbReference>
<dbReference type="CDD" id="cd00653">
    <property type="entry name" value="RNA_pol_B_RPB2"/>
    <property type="match status" value="1"/>
</dbReference>
<dbReference type="Gene3D" id="2.40.50.100">
    <property type="match status" value="1"/>
</dbReference>
<dbReference type="Gene3D" id="2.40.50.150">
    <property type="match status" value="1"/>
</dbReference>
<dbReference type="Gene3D" id="3.90.1100.10">
    <property type="match status" value="1"/>
</dbReference>
<dbReference type="Gene3D" id="2.30.150.10">
    <property type="entry name" value="DNA-directed RNA polymerase, beta subunit, external 1 domain"/>
    <property type="match status" value="1"/>
</dbReference>
<dbReference type="Gene3D" id="2.40.270.10">
    <property type="entry name" value="DNA-directed RNA polymerase, subunit 2, domain 6"/>
    <property type="match status" value="1"/>
</dbReference>
<dbReference type="Gene3D" id="3.90.1800.10">
    <property type="entry name" value="RNA polymerase alpha subunit dimerisation domain"/>
    <property type="match status" value="1"/>
</dbReference>
<dbReference type="Gene3D" id="3.90.1110.10">
    <property type="entry name" value="RNA polymerase Rpb2, domain 2"/>
    <property type="match status" value="1"/>
</dbReference>
<dbReference type="HAMAP" id="MF_01321">
    <property type="entry name" value="RNApol_bact_RpoB"/>
    <property type="match status" value="1"/>
</dbReference>
<dbReference type="InterPro" id="IPR042107">
    <property type="entry name" value="DNA-dir_RNA_pol_bsu_ext_1_sf"/>
</dbReference>
<dbReference type="InterPro" id="IPR015712">
    <property type="entry name" value="DNA-dir_RNA_pol_su2"/>
</dbReference>
<dbReference type="InterPro" id="IPR007120">
    <property type="entry name" value="DNA-dir_RNAP_su2_dom"/>
</dbReference>
<dbReference type="InterPro" id="IPR037033">
    <property type="entry name" value="DNA-dir_RNAP_su2_hyb_sf"/>
</dbReference>
<dbReference type="InterPro" id="IPR010243">
    <property type="entry name" value="RNA_pol_bsu_bac"/>
</dbReference>
<dbReference type="InterPro" id="IPR007121">
    <property type="entry name" value="RNA_pol_bsu_CS"/>
</dbReference>
<dbReference type="InterPro" id="IPR007644">
    <property type="entry name" value="RNA_pol_bsu_protrusion"/>
</dbReference>
<dbReference type="InterPro" id="IPR007642">
    <property type="entry name" value="RNA_pol_Rpb2_2"/>
</dbReference>
<dbReference type="InterPro" id="IPR037034">
    <property type="entry name" value="RNA_pol_Rpb2_2_sf"/>
</dbReference>
<dbReference type="InterPro" id="IPR007645">
    <property type="entry name" value="RNA_pol_Rpb2_3"/>
</dbReference>
<dbReference type="InterPro" id="IPR007641">
    <property type="entry name" value="RNA_pol_Rpb2_7"/>
</dbReference>
<dbReference type="InterPro" id="IPR014724">
    <property type="entry name" value="RNA_pol_RPB2_OB-fold"/>
</dbReference>
<dbReference type="NCBIfam" id="NF001616">
    <property type="entry name" value="PRK00405.1"/>
    <property type="match status" value="1"/>
</dbReference>
<dbReference type="PANTHER" id="PTHR20856">
    <property type="entry name" value="DNA-DIRECTED RNA POLYMERASE I SUBUNIT 2"/>
    <property type="match status" value="1"/>
</dbReference>
<dbReference type="Pfam" id="PF04563">
    <property type="entry name" value="RNA_pol_Rpb2_1"/>
    <property type="match status" value="1"/>
</dbReference>
<dbReference type="Pfam" id="PF04561">
    <property type="entry name" value="RNA_pol_Rpb2_2"/>
    <property type="match status" value="1"/>
</dbReference>
<dbReference type="Pfam" id="PF04565">
    <property type="entry name" value="RNA_pol_Rpb2_3"/>
    <property type="match status" value="1"/>
</dbReference>
<dbReference type="Pfam" id="PF00562">
    <property type="entry name" value="RNA_pol_Rpb2_6"/>
    <property type="match status" value="1"/>
</dbReference>
<dbReference type="Pfam" id="PF04560">
    <property type="entry name" value="RNA_pol_Rpb2_7"/>
    <property type="match status" value="1"/>
</dbReference>
<dbReference type="SUPFAM" id="SSF64484">
    <property type="entry name" value="beta and beta-prime subunits of DNA dependent RNA-polymerase"/>
    <property type="match status" value="1"/>
</dbReference>
<dbReference type="PROSITE" id="PS01166">
    <property type="entry name" value="RNA_POL_BETA"/>
    <property type="match status" value="1"/>
</dbReference>
<gene>
    <name evidence="1" type="primary">rpoB</name>
</gene>
<geneLocation type="chloroplast"/>
<evidence type="ECO:0000255" key="1">
    <source>
        <dbReference type="HAMAP-Rule" id="MF_01321"/>
    </source>
</evidence>
<name>RPOB_HELAN</name>